<proteinExistence type="inferred from homology"/>
<sequence length="544" mass="57171">MSAKDVKFGDSARSKMIAGVNVLADAVKVTLGPKGRNVVIDRSFGAPHITKDGVTVAKEITLKDKFENMGAQLVREVSSKTNDIAGDGTTTATVLAQAILNEGIKSVTAGMNPMDLKRGIDIAVRAVVENIRATAKPADDFKAIEQVGSISANSDETVGKLIAQAMEKVGKEGVITVEEGSGFEDALDVVEGMQFDRGYISPYFANKQDTLTAELENPFILLVDKKISNIRELITTLEAVAKTGKPLLIIAEDVEGEALATLVVNNMRGIIKVCAVKAPGFGDRRKAMLQDIAILTGATVISEEVGMSLEQASLQDLGTAHKITVSKENTVIVDGAGDANAIAERVQQIRAQIEESTSEYDKEKLQERVAKLAGGVAVIKIGAATEVEMKEKKDRVDDALHATRAAVEEGVVAGGGVALVRAVNSLDGLTGANDDQTVGINILRRAIEAPLRQIVSNAGDEPSVVINAVKAGEGNYGYNAATGVYGDMLEMGILDPAKVTRSALEHAASVAGLMLTTEAMITDIPEDKPAMPDMGGMGGMGGMM</sequence>
<dbReference type="EC" id="5.6.1.7" evidence="1"/>
<dbReference type="EMBL" id="CR543861">
    <property type="protein sequence ID" value="CAG69569.1"/>
    <property type="molecule type" value="Genomic_DNA"/>
</dbReference>
<dbReference type="RefSeq" id="WP_004929298.1">
    <property type="nucleotide sequence ID" value="NC_005966.1"/>
</dbReference>
<dbReference type="SMR" id="Q6F8P6"/>
<dbReference type="STRING" id="202950.GCA_001485005_03022"/>
<dbReference type="GeneID" id="45235074"/>
<dbReference type="KEGG" id="aci:ACIAD2838"/>
<dbReference type="eggNOG" id="COG0459">
    <property type="taxonomic scope" value="Bacteria"/>
</dbReference>
<dbReference type="HOGENOM" id="CLU_016503_3_0_6"/>
<dbReference type="OrthoDB" id="9766614at2"/>
<dbReference type="BioCyc" id="ASP62977:ACIAD_RS12795-MONOMER"/>
<dbReference type="Proteomes" id="UP000000430">
    <property type="component" value="Chromosome"/>
</dbReference>
<dbReference type="GO" id="GO:0005737">
    <property type="term" value="C:cytoplasm"/>
    <property type="evidence" value="ECO:0007669"/>
    <property type="project" value="UniProtKB-SubCell"/>
</dbReference>
<dbReference type="GO" id="GO:0005524">
    <property type="term" value="F:ATP binding"/>
    <property type="evidence" value="ECO:0007669"/>
    <property type="project" value="UniProtKB-UniRule"/>
</dbReference>
<dbReference type="GO" id="GO:0140662">
    <property type="term" value="F:ATP-dependent protein folding chaperone"/>
    <property type="evidence" value="ECO:0007669"/>
    <property type="project" value="InterPro"/>
</dbReference>
<dbReference type="GO" id="GO:0016853">
    <property type="term" value="F:isomerase activity"/>
    <property type="evidence" value="ECO:0007669"/>
    <property type="project" value="UniProtKB-KW"/>
</dbReference>
<dbReference type="GO" id="GO:0051082">
    <property type="term" value="F:unfolded protein binding"/>
    <property type="evidence" value="ECO:0007669"/>
    <property type="project" value="UniProtKB-UniRule"/>
</dbReference>
<dbReference type="GO" id="GO:0042026">
    <property type="term" value="P:protein refolding"/>
    <property type="evidence" value="ECO:0007669"/>
    <property type="project" value="UniProtKB-UniRule"/>
</dbReference>
<dbReference type="CDD" id="cd03344">
    <property type="entry name" value="GroEL"/>
    <property type="match status" value="1"/>
</dbReference>
<dbReference type="FunFam" id="1.10.560.10:FF:000001">
    <property type="entry name" value="60 kDa chaperonin"/>
    <property type="match status" value="1"/>
</dbReference>
<dbReference type="FunFam" id="3.50.7.10:FF:000001">
    <property type="entry name" value="60 kDa chaperonin"/>
    <property type="match status" value="1"/>
</dbReference>
<dbReference type="Gene3D" id="3.50.7.10">
    <property type="entry name" value="GroEL"/>
    <property type="match status" value="1"/>
</dbReference>
<dbReference type="Gene3D" id="1.10.560.10">
    <property type="entry name" value="GroEL-like equatorial domain"/>
    <property type="match status" value="1"/>
</dbReference>
<dbReference type="Gene3D" id="3.30.260.10">
    <property type="entry name" value="TCP-1-like chaperonin intermediate domain"/>
    <property type="match status" value="1"/>
</dbReference>
<dbReference type="HAMAP" id="MF_00600">
    <property type="entry name" value="CH60"/>
    <property type="match status" value="1"/>
</dbReference>
<dbReference type="InterPro" id="IPR018370">
    <property type="entry name" value="Chaperonin_Cpn60_CS"/>
</dbReference>
<dbReference type="InterPro" id="IPR001844">
    <property type="entry name" value="Cpn60/GroEL"/>
</dbReference>
<dbReference type="InterPro" id="IPR002423">
    <property type="entry name" value="Cpn60/GroEL/TCP-1"/>
</dbReference>
<dbReference type="InterPro" id="IPR027409">
    <property type="entry name" value="GroEL-like_apical_dom_sf"/>
</dbReference>
<dbReference type="InterPro" id="IPR027413">
    <property type="entry name" value="GROEL-like_equatorial_sf"/>
</dbReference>
<dbReference type="InterPro" id="IPR027410">
    <property type="entry name" value="TCP-1-like_intermed_sf"/>
</dbReference>
<dbReference type="NCBIfam" id="TIGR02348">
    <property type="entry name" value="GroEL"/>
    <property type="match status" value="1"/>
</dbReference>
<dbReference type="NCBIfam" id="NF000592">
    <property type="entry name" value="PRK00013.1"/>
    <property type="match status" value="1"/>
</dbReference>
<dbReference type="NCBIfam" id="NF009487">
    <property type="entry name" value="PRK12849.1"/>
    <property type="match status" value="1"/>
</dbReference>
<dbReference type="NCBIfam" id="NF009488">
    <property type="entry name" value="PRK12850.1"/>
    <property type="match status" value="1"/>
</dbReference>
<dbReference type="NCBIfam" id="NF009489">
    <property type="entry name" value="PRK12851.1"/>
    <property type="match status" value="1"/>
</dbReference>
<dbReference type="PANTHER" id="PTHR45633">
    <property type="entry name" value="60 KDA HEAT SHOCK PROTEIN, MITOCHONDRIAL"/>
    <property type="match status" value="1"/>
</dbReference>
<dbReference type="Pfam" id="PF00118">
    <property type="entry name" value="Cpn60_TCP1"/>
    <property type="match status" value="1"/>
</dbReference>
<dbReference type="PRINTS" id="PR00298">
    <property type="entry name" value="CHAPERONIN60"/>
</dbReference>
<dbReference type="SUPFAM" id="SSF52029">
    <property type="entry name" value="GroEL apical domain-like"/>
    <property type="match status" value="1"/>
</dbReference>
<dbReference type="SUPFAM" id="SSF48592">
    <property type="entry name" value="GroEL equatorial domain-like"/>
    <property type="match status" value="1"/>
</dbReference>
<dbReference type="SUPFAM" id="SSF54849">
    <property type="entry name" value="GroEL-intermediate domain like"/>
    <property type="match status" value="1"/>
</dbReference>
<dbReference type="PROSITE" id="PS00296">
    <property type="entry name" value="CHAPERONINS_CPN60"/>
    <property type="match status" value="1"/>
</dbReference>
<reference key="1">
    <citation type="journal article" date="2004" name="Nucleic Acids Res.">
        <title>Unique features revealed by the genome sequence of Acinetobacter sp. ADP1, a versatile and naturally transformation competent bacterium.</title>
        <authorList>
            <person name="Barbe V."/>
            <person name="Vallenet D."/>
            <person name="Fonknechten N."/>
            <person name="Kreimeyer A."/>
            <person name="Oztas S."/>
            <person name="Labarre L."/>
            <person name="Cruveiller S."/>
            <person name="Robert C."/>
            <person name="Duprat S."/>
            <person name="Wincker P."/>
            <person name="Ornston L.N."/>
            <person name="Weissenbach J."/>
            <person name="Marliere P."/>
            <person name="Cohen G.N."/>
            <person name="Medigue C."/>
        </authorList>
    </citation>
    <scope>NUCLEOTIDE SEQUENCE [LARGE SCALE GENOMIC DNA]</scope>
    <source>
        <strain>ATCC 33305 / BD413 / ADP1</strain>
    </source>
</reference>
<keyword id="KW-0067">ATP-binding</keyword>
<keyword id="KW-0143">Chaperone</keyword>
<keyword id="KW-0963">Cytoplasm</keyword>
<keyword id="KW-0413">Isomerase</keyword>
<keyword id="KW-0547">Nucleotide-binding</keyword>
<organism>
    <name type="scientific">Acinetobacter baylyi (strain ATCC 33305 / BD413 / ADP1)</name>
    <dbReference type="NCBI Taxonomy" id="62977"/>
    <lineage>
        <taxon>Bacteria</taxon>
        <taxon>Pseudomonadati</taxon>
        <taxon>Pseudomonadota</taxon>
        <taxon>Gammaproteobacteria</taxon>
        <taxon>Moraxellales</taxon>
        <taxon>Moraxellaceae</taxon>
        <taxon>Acinetobacter</taxon>
    </lineage>
</organism>
<gene>
    <name evidence="1" type="primary">groEL</name>
    <name evidence="1" type="synonym">groL</name>
    <name type="ordered locus">ACIAD2838</name>
</gene>
<name>CH60_ACIAD</name>
<protein>
    <recommendedName>
        <fullName evidence="1">Chaperonin GroEL</fullName>
        <ecNumber evidence="1">5.6.1.7</ecNumber>
    </recommendedName>
    <alternativeName>
        <fullName evidence="1">60 kDa chaperonin</fullName>
    </alternativeName>
    <alternativeName>
        <fullName evidence="1">Chaperonin-60</fullName>
        <shortName evidence="1">Cpn60</shortName>
    </alternativeName>
</protein>
<evidence type="ECO:0000255" key="1">
    <source>
        <dbReference type="HAMAP-Rule" id="MF_00600"/>
    </source>
</evidence>
<comment type="function">
    <text evidence="1">Together with its co-chaperonin GroES, plays an essential role in assisting protein folding. The GroEL-GroES system forms a nano-cage that allows encapsulation of the non-native substrate proteins and provides a physical environment optimized to promote and accelerate protein folding.</text>
</comment>
<comment type="catalytic activity">
    <reaction evidence="1">
        <text>ATP + H2O + a folded polypeptide = ADP + phosphate + an unfolded polypeptide.</text>
        <dbReference type="EC" id="5.6.1.7"/>
    </reaction>
</comment>
<comment type="subunit">
    <text evidence="1">Forms a cylinder of 14 subunits composed of two heptameric rings stacked back-to-back. Interacts with the co-chaperonin GroES.</text>
</comment>
<comment type="subcellular location">
    <subcellularLocation>
        <location evidence="1">Cytoplasm</location>
    </subcellularLocation>
</comment>
<comment type="similarity">
    <text evidence="1">Belongs to the chaperonin (HSP60) family.</text>
</comment>
<feature type="chain" id="PRO_0000063251" description="Chaperonin GroEL">
    <location>
        <begin position="1"/>
        <end position="544"/>
    </location>
</feature>
<feature type="binding site" evidence="1">
    <location>
        <begin position="30"/>
        <end position="33"/>
    </location>
    <ligand>
        <name>ATP</name>
        <dbReference type="ChEBI" id="CHEBI:30616"/>
    </ligand>
</feature>
<feature type="binding site" evidence="1">
    <location>
        <position position="51"/>
    </location>
    <ligand>
        <name>ATP</name>
        <dbReference type="ChEBI" id="CHEBI:30616"/>
    </ligand>
</feature>
<feature type="binding site" evidence="1">
    <location>
        <begin position="87"/>
        <end position="91"/>
    </location>
    <ligand>
        <name>ATP</name>
        <dbReference type="ChEBI" id="CHEBI:30616"/>
    </ligand>
</feature>
<feature type="binding site" evidence="1">
    <location>
        <position position="415"/>
    </location>
    <ligand>
        <name>ATP</name>
        <dbReference type="ChEBI" id="CHEBI:30616"/>
    </ligand>
</feature>
<feature type="binding site" evidence="1">
    <location>
        <begin position="479"/>
        <end position="481"/>
    </location>
    <ligand>
        <name>ATP</name>
        <dbReference type="ChEBI" id="CHEBI:30616"/>
    </ligand>
</feature>
<feature type="binding site" evidence="1">
    <location>
        <position position="495"/>
    </location>
    <ligand>
        <name>ATP</name>
        <dbReference type="ChEBI" id="CHEBI:30616"/>
    </ligand>
</feature>
<accession>Q6F8P6</accession>